<sequence>MVLRNPDKKGIASALDERSGEIFRRIVESYLESGEPLGSRNLSRLLPISLSPASVRNVMSDLEDLGLIYSPHVSAGRLPTQTGLRFFVDAFMQVGNLSPEERASIERQVGPGNRDHSVENLLTEASQMLSGMSRGAGLVITTKSDPVLKHVEFIRLAPTKALAVLVGEHDQVENRIIELPAGITSAQLTEAANFVNAHLAGQTIPELRTQLEKVKETVRGELDALSQDLVERGLAIWSGSEGDGQPARLIVRGRANLLEGLEGTEDIERLRMLFDDLEKKDSLIEILNLAESGPGVRIFIGSENKLFSLSGSSLIVAPYRDSDDRIVGAVGVIGPTRLNYSRIVPMVDYTAQLMSRMSR</sequence>
<evidence type="ECO:0000255" key="1">
    <source>
        <dbReference type="HAMAP-Rule" id="MF_00081"/>
    </source>
</evidence>
<accession>A6U5E1</accession>
<proteinExistence type="inferred from homology"/>
<comment type="function">
    <text evidence="1">Negative regulator of class I heat shock genes (grpE-dnaK-dnaJ and groELS operons). Prevents heat-shock induction of these operons.</text>
</comment>
<comment type="similarity">
    <text evidence="1">Belongs to the HrcA family.</text>
</comment>
<feature type="chain" id="PRO_1000010447" description="Heat-inducible transcription repressor HrcA">
    <location>
        <begin position="1"/>
        <end position="359"/>
    </location>
</feature>
<name>HRCA_SINMW</name>
<reference key="1">
    <citation type="submission" date="2007-06" db="EMBL/GenBank/DDBJ databases">
        <title>Complete sequence of Sinorhizobium medicae WSM419 chromosome.</title>
        <authorList>
            <consortium name="US DOE Joint Genome Institute"/>
            <person name="Copeland A."/>
            <person name="Lucas S."/>
            <person name="Lapidus A."/>
            <person name="Barry K."/>
            <person name="Glavina del Rio T."/>
            <person name="Dalin E."/>
            <person name="Tice H."/>
            <person name="Pitluck S."/>
            <person name="Chain P."/>
            <person name="Malfatti S."/>
            <person name="Shin M."/>
            <person name="Vergez L."/>
            <person name="Schmutz J."/>
            <person name="Larimer F."/>
            <person name="Land M."/>
            <person name="Hauser L."/>
            <person name="Kyrpides N."/>
            <person name="Mikhailova N."/>
            <person name="Reeve W.G."/>
            <person name="Richardson P."/>
        </authorList>
    </citation>
    <scope>NUCLEOTIDE SEQUENCE [LARGE SCALE GENOMIC DNA]</scope>
    <source>
        <strain>WSM419</strain>
    </source>
</reference>
<keyword id="KW-0678">Repressor</keyword>
<keyword id="KW-0346">Stress response</keyword>
<keyword id="KW-0804">Transcription</keyword>
<keyword id="KW-0805">Transcription regulation</keyword>
<protein>
    <recommendedName>
        <fullName evidence="1">Heat-inducible transcription repressor HrcA</fullName>
    </recommendedName>
</protein>
<gene>
    <name evidence="1" type="primary">hrcA</name>
    <name type="ordered locus">Smed_0011</name>
</gene>
<organism>
    <name type="scientific">Sinorhizobium medicae (strain WSM419)</name>
    <name type="common">Ensifer medicae</name>
    <dbReference type="NCBI Taxonomy" id="366394"/>
    <lineage>
        <taxon>Bacteria</taxon>
        <taxon>Pseudomonadati</taxon>
        <taxon>Pseudomonadota</taxon>
        <taxon>Alphaproteobacteria</taxon>
        <taxon>Hyphomicrobiales</taxon>
        <taxon>Rhizobiaceae</taxon>
        <taxon>Sinorhizobium/Ensifer group</taxon>
        <taxon>Sinorhizobium</taxon>
    </lineage>
</organism>
<dbReference type="EMBL" id="CP000738">
    <property type="protein sequence ID" value="ABR58871.1"/>
    <property type="molecule type" value="Genomic_DNA"/>
</dbReference>
<dbReference type="RefSeq" id="WP_011974226.1">
    <property type="nucleotide sequence ID" value="NC_009636.1"/>
</dbReference>
<dbReference type="RefSeq" id="YP_001325706.1">
    <property type="nucleotide sequence ID" value="NC_009636.1"/>
</dbReference>
<dbReference type="SMR" id="A6U5E1"/>
<dbReference type="STRING" id="366394.Smed_0011"/>
<dbReference type="GeneID" id="61611139"/>
<dbReference type="KEGG" id="smd:Smed_0011"/>
<dbReference type="PATRIC" id="fig|366394.8.peg.3066"/>
<dbReference type="eggNOG" id="COG1420">
    <property type="taxonomic scope" value="Bacteria"/>
</dbReference>
<dbReference type="HOGENOM" id="CLU_050019_0_0_5"/>
<dbReference type="OrthoDB" id="9783139at2"/>
<dbReference type="Proteomes" id="UP000001108">
    <property type="component" value="Chromosome"/>
</dbReference>
<dbReference type="GO" id="GO:0003677">
    <property type="term" value="F:DNA binding"/>
    <property type="evidence" value="ECO:0007669"/>
    <property type="project" value="InterPro"/>
</dbReference>
<dbReference type="GO" id="GO:0045892">
    <property type="term" value="P:negative regulation of DNA-templated transcription"/>
    <property type="evidence" value="ECO:0007669"/>
    <property type="project" value="UniProtKB-UniRule"/>
</dbReference>
<dbReference type="Gene3D" id="3.30.450.40">
    <property type="match status" value="1"/>
</dbReference>
<dbReference type="Gene3D" id="3.30.390.60">
    <property type="entry name" value="Heat-inducible transcription repressor hrca homolog, domain 3"/>
    <property type="match status" value="1"/>
</dbReference>
<dbReference type="Gene3D" id="1.10.10.10">
    <property type="entry name" value="Winged helix-like DNA-binding domain superfamily/Winged helix DNA-binding domain"/>
    <property type="match status" value="1"/>
</dbReference>
<dbReference type="HAMAP" id="MF_00081">
    <property type="entry name" value="HrcA"/>
    <property type="match status" value="1"/>
</dbReference>
<dbReference type="InterPro" id="IPR029016">
    <property type="entry name" value="GAF-like_dom_sf"/>
</dbReference>
<dbReference type="InterPro" id="IPR002571">
    <property type="entry name" value="HrcA"/>
</dbReference>
<dbReference type="InterPro" id="IPR021153">
    <property type="entry name" value="HrcA_C"/>
</dbReference>
<dbReference type="InterPro" id="IPR036388">
    <property type="entry name" value="WH-like_DNA-bd_sf"/>
</dbReference>
<dbReference type="InterPro" id="IPR036390">
    <property type="entry name" value="WH_DNA-bd_sf"/>
</dbReference>
<dbReference type="InterPro" id="IPR023120">
    <property type="entry name" value="WHTH_transcript_rep_HrcA_IDD"/>
</dbReference>
<dbReference type="NCBIfam" id="TIGR00331">
    <property type="entry name" value="hrcA"/>
    <property type="match status" value="1"/>
</dbReference>
<dbReference type="PANTHER" id="PTHR34824">
    <property type="entry name" value="HEAT-INDUCIBLE TRANSCRIPTION REPRESSOR HRCA"/>
    <property type="match status" value="1"/>
</dbReference>
<dbReference type="PANTHER" id="PTHR34824:SF1">
    <property type="entry name" value="HEAT-INDUCIBLE TRANSCRIPTION REPRESSOR HRCA"/>
    <property type="match status" value="1"/>
</dbReference>
<dbReference type="Pfam" id="PF01628">
    <property type="entry name" value="HrcA"/>
    <property type="match status" value="1"/>
</dbReference>
<dbReference type="PIRSF" id="PIRSF005485">
    <property type="entry name" value="HrcA"/>
    <property type="match status" value="1"/>
</dbReference>
<dbReference type="SUPFAM" id="SSF55781">
    <property type="entry name" value="GAF domain-like"/>
    <property type="match status" value="1"/>
</dbReference>
<dbReference type="SUPFAM" id="SSF46785">
    <property type="entry name" value="Winged helix' DNA-binding domain"/>
    <property type="match status" value="1"/>
</dbReference>